<proteinExistence type="evidence at protein level"/>
<feature type="chain" id="PRO_0000155144" description="Ice-structuring protein SS-3">
    <location>
        <begin position="1"/>
        <end position="33"/>
    </location>
</feature>
<feature type="helix" evidence="2">
    <location>
        <begin position="3"/>
        <end position="6"/>
    </location>
</feature>
<feature type="helix" evidence="2">
    <location>
        <begin position="7"/>
        <end position="9"/>
    </location>
</feature>
<feature type="helix" evidence="2">
    <location>
        <begin position="10"/>
        <end position="28"/>
    </location>
</feature>
<evidence type="ECO:0000305" key="1"/>
<evidence type="ECO:0007829" key="2">
    <source>
        <dbReference type="PDB" id="1Y03"/>
    </source>
</evidence>
<organism>
    <name type="scientific">Myoxocephalus scorpius</name>
    <name type="common">Shorthorn sculpin</name>
    <name type="synonym">Cottus scorpius</name>
    <dbReference type="NCBI Taxonomy" id="8097"/>
    <lineage>
        <taxon>Eukaryota</taxon>
        <taxon>Metazoa</taxon>
        <taxon>Chordata</taxon>
        <taxon>Craniata</taxon>
        <taxon>Vertebrata</taxon>
        <taxon>Euteleostomi</taxon>
        <taxon>Actinopterygii</taxon>
        <taxon>Neopterygii</taxon>
        <taxon>Teleostei</taxon>
        <taxon>Neoteleostei</taxon>
        <taxon>Acanthomorphata</taxon>
        <taxon>Eupercaria</taxon>
        <taxon>Perciformes</taxon>
        <taxon>Cottioidei</taxon>
        <taxon>Cottales</taxon>
        <taxon>Cottidae</taxon>
        <taxon>Myoxocephalus</taxon>
    </lineage>
</organism>
<accession>P04367</accession>
<protein>
    <recommendedName>
        <fullName>Ice-structuring protein SS-3</fullName>
        <shortName>ISP SS-3</shortName>
    </recommendedName>
    <alternativeName>
        <fullName>Antifreeze peptide SS-3</fullName>
    </alternativeName>
</protein>
<sequence>MNAPARAAAKTAADALAAAKKTAADAAAAAAAA</sequence>
<reference key="1">
    <citation type="journal article" date="1985" name="Eur. J. Biochem.">
        <title>Structures of shorthorn sculpin antifreeze polypeptides.</title>
        <authorList>
            <person name="Hew C.-L."/>
            <person name="Joshi S."/>
            <person name="Wang N.-C."/>
            <person name="Kao M.H."/>
            <person name="Ananthanarayanan V.S."/>
        </authorList>
    </citation>
    <scope>PROTEIN SEQUENCE</scope>
</reference>
<reference key="2">
    <citation type="journal article" date="1996" name="J. Biol. Chem.">
        <title>Skin antifreeze protein genes of the winter flounder, Pleuronectes americanus, encode distinct and active polypeptides without the secretory signal and prosequences.</title>
        <authorList>
            <person name="Gong Z."/>
            <person name="Ewart K.V."/>
            <person name="Hu Z."/>
            <person name="Fletcher G.L."/>
            <person name="Hew C.-L."/>
        </authorList>
    </citation>
    <scope>PROTEIN SEQUENCE</scope>
</reference>
<reference key="3">
    <citation type="journal article" date="2005" name="Biochemistry">
        <title>Solution structure of a recombinant type I sculpin antifreeze protein.</title>
        <authorList>
            <person name="Kwan A.H."/>
            <person name="Fairley K."/>
            <person name="Anderberg P.I."/>
            <person name="Liew C.W."/>
            <person name="Harding M.M."/>
            <person name="Mackay J.P."/>
        </authorList>
    </citation>
    <scope>STRUCTURE BY NMR</scope>
</reference>
<name>ANP3_MYOSC</name>
<dbReference type="PIR" id="A05162">
    <property type="entry name" value="A05162"/>
</dbReference>
<dbReference type="PDB" id="1Y03">
    <property type="method" value="NMR"/>
    <property type="chains" value="A=1-33"/>
</dbReference>
<dbReference type="PDB" id="1Y04">
    <property type="method" value="NMR"/>
    <property type="chains" value="A=1-33"/>
</dbReference>
<dbReference type="PDBsum" id="1Y03"/>
<dbReference type="PDBsum" id="1Y04"/>
<dbReference type="SMR" id="P04367"/>
<dbReference type="EvolutionaryTrace" id="P04367"/>
<keyword id="KW-0002">3D-structure</keyword>
<keyword id="KW-0047">Antifreeze protein</keyword>
<keyword id="KW-0903">Direct protein sequencing</keyword>
<keyword id="KW-0677">Repeat</keyword>
<comment type="function">
    <text>Antifreeze proteins lower the blood freezing point.</text>
</comment>
<comment type="similarity">
    <text evidence="1">Belongs to the type-I AFP family.</text>
</comment>